<feature type="signal peptide" evidence="2">
    <location>
        <begin position="1"/>
        <end position="41"/>
    </location>
</feature>
<feature type="chain" id="PRO_0000251976" description="Sushi domain-containing protein 4">
    <location>
        <begin position="42"/>
        <end position="490"/>
    </location>
</feature>
<feature type="topological domain" description="Extracellular" evidence="2">
    <location>
        <begin position="42"/>
        <end position="319"/>
    </location>
</feature>
<feature type="transmembrane region" description="Helical" evidence="2">
    <location>
        <begin position="320"/>
        <end position="340"/>
    </location>
</feature>
<feature type="topological domain" description="Cytoplasmic" evidence="2">
    <location>
        <begin position="341"/>
        <end position="490"/>
    </location>
</feature>
<feature type="domain" description="Sushi 1" evidence="3">
    <location>
        <begin position="55"/>
        <end position="119"/>
    </location>
</feature>
<feature type="domain" description="Sushi 2" evidence="3">
    <location>
        <begin position="120"/>
        <end position="179"/>
    </location>
</feature>
<feature type="domain" description="Sushi 3" evidence="3">
    <location>
        <begin position="178"/>
        <end position="239"/>
    </location>
</feature>
<feature type="domain" description="Sushi 4" evidence="3">
    <location>
        <begin position="241"/>
        <end position="304"/>
    </location>
</feature>
<feature type="region of interest" description="Disordered" evidence="4">
    <location>
        <begin position="1"/>
        <end position="20"/>
    </location>
</feature>
<feature type="region of interest" description="Disordered" evidence="4">
    <location>
        <begin position="394"/>
        <end position="490"/>
    </location>
</feature>
<feature type="compositionally biased region" description="Polar residues" evidence="4">
    <location>
        <begin position="430"/>
        <end position="444"/>
    </location>
</feature>
<feature type="compositionally biased region" description="Polar residues" evidence="4">
    <location>
        <begin position="461"/>
        <end position="475"/>
    </location>
</feature>
<feature type="compositionally biased region" description="Acidic residues" evidence="4">
    <location>
        <begin position="479"/>
        <end position="490"/>
    </location>
</feature>
<feature type="glycosylation site" description="N-linked (GlcNAc...) asparagine" evidence="2">
    <location>
        <position position="104"/>
    </location>
</feature>
<feature type="glycosylation site" description="N-linked (GlcNAc...) asparagine" evidence="2">
    <location>
        <position position="134"/>
    </location>
</feature>
<feature type="glycosylation site" description="N-linked (GlcNAc...) asparagine" evidence="2">
    <location>
        <position position="192"/>
    </location>
</feature>
<feature type="disulfide bond" evidence="3">
    <location>
        <begin position="57"/>
        <end position="99"/>
    </location>
</feature>
<feature type="disulfide bond" evidence="3">
    <location>
        <begin position="85"/>
        <end position="117"/>
    </location>
</feature>
<feature type="disulfide bond" evidence="3">
    <location>
        <begin position="122"/>
        <end position="165"/>
    </location>
</feature>
<feature type="disulfide bond" evidence="3">
    <location>
        <begin position="147"/>
        <end position="177"/>
    </location>
</feature>
<feature type="disulfide bond" evidence="3">
    <location>
        <begin position="180"/>
        <end position="224"/>
    </location>
</feature>
<feature type="disulfide bond" evidence="3">
    <location>
        <begin position="210"/>
        <end position="237"/>
    </location>
</feature>
<feature type="disulfide bond" evidence="3">
    <location>
        <begin position="243"/>
        <end position="289"/>
    </location>
</feature>
<feature type="disulfide bond" evidence="3">
    <location>
        <begin position="274"/>
        <end position="302"/>
    </location>
</feature>
<feature type="splice variant" id="VSP_020844" description="In isoform 2." evidence="6">
    <original>E</original>
    <variation>EAQ</variation>
    <location>
        <position position="241"/>
    </location>
</feature>
<dbReference type="EMBL" id="AK035779">
    <property type="protein sequence ID" value="BAC29184.1"/>
    <property type="molecule type" value="mRNA"/>
</dbReference>
<dbReference type="EMBL" id="AK088629">
    <property type="protein sequence ID" value="BAC40464.1"/>
    <property type="molecule type" value="mRNA"/>
</dbReference>
<dbReference type="EMBL" id="BC021842">
    <property type="protein sequence ID" value="AAH21842.2"/>
    <property type="molecule type" value="mRNA"/>
</dbReference>
<dbReference type="CCDS" id="CCDS15590.1">
    <molecule id="Q8BH32-1"/>
</dbReference>
<dbReference type="RefSeq" id="NP_001343390.1">
    <molecule id="Q8BH32-1"/>
    <property type="nucleotide sequence ID" value="NM_001356461.1"/>
</dbReference>
<dbReference type="RefSeq" id="NP_001343391.1">
    <molecule id="Q8BH32-1"/>
    <property type="nucleotide sequence ID" value="NM_001356462.1"/>
</dbReference>
<dbReference type="RefSeq" id="NP_001343392.1">
    <molecule id="Q8BH32-2"/>
    <property type="nucleotide sequence ID" value="NM_001356463.1"/>
</dbReference>
<dbReference type="RefSeq" id="NP_001343393.1">
    <molecule id="Q8BH32-2"/>
    <property type="nucleotide sequence ID" value="NM_001356464.1"/>
</dbReference>
<dbReference type="RefSeq" id="NP_659045.2">
    <molecule id="Q8BH32-1"/>
    <property type="nucleotide sequence ID" value="NM_144796.4"/>
</dbReference>
<dbReference type="RefSeq" id="XP_006497124.1">
    <property type="nucleotide sequence ID" value="XM_006497061.3"/>
</dbReference>
<dbReference type="RefSeq" id="XP_006497126.1">
    <molecule id="Q8BH32-2"/>
    <property type="nucleotide sequence ID" value="XM_006497063.2"/>
</dbReference>
<dbReference type="RefSeq" id="XP_006497127.1">
    <property type="nucleotide sequence ID" value="XM_006497064.3"/>
</dbReference>
<dbReference type="RefSeq" id="XP_030099683.1">
    <molecule id="Q8BH32-1"/>
    <property type="nucleotide sequence ID" value="XM_030243823.1"/>
</dbReference>
<dbReference type="SMR" id="Q8BH32"/>
<dbReference type="FunCoup" id="Q8BH32">
    <property type="interactions" value="3"/>
</dbReference>
<dbReference type="STRING" id="10090.ENSMUSP00000082873"/>
<dbReference type="GlyConnect" id="2430">
    <molecule id="Q8BH32-2"/>
    <property type="glycosylation" value="1 N-Linked glycan (1 site)"/>
</dbReference>
<dbReference type="GlyCosmos" id="Q8BH32">
    <property type="glycosylation" value="3 sites, 1 glycan"/>
</dbReference>
<dbReference type="GlyGen" id="Q8BH32">
    <property type="glycosylation" value="3 sites, 2 N-linked glycans (2 sites)"/>
</dbReference>
<dbReference type="iPTMnet" id="Q8BH32"/>
<dbReference type="PhosphoSitePlus" id="Q8BH32"/>
<dbReference type="PaxDb" id="10090-ENSMUSP00000082873"/>
<dbReference type="ProteomicsDB" id="254782">
    <molecule id="Q8BH32-1"/>
</dbReference>
<dbReference type="ProteomicsDB" id="254783">
    <molecule id="Q8BH32-2"/>
</dbReference>
<dbReference type="Antibodypedia" id="34634">
    <property type="antibodies" value="72 antibodies from 15 providers"/>
</dbReference>
<dbReference type="Ensembl" id="ENSMUST00000085724.5">
    <molecule id="Q8BH32-1"/>
    <property type="protein sequence ID" value="ENSMUSP00000082873.4"/>
    <property type="gene ID" value="ENSMUSG00000038576.16"/>
</dbReference>
<dbReference type="Ensembl" id="ENSMUST00000153348.8">
    <molecule id="Q8BH32-1"/>
    <property type="protein sequence ID" value="ENSMUSP00000119488.2"/>
    <property type="gene ID" value="ENSMUSG00000038576.16"/>
</dbReference>
<dbReference type="GeneID" id="96935"/>
<dbReference type="KEGG" id="mmu:96935"/>
<dbReference type="UCSC" id="uc007dyk.1">
    <molecule id="Q8BH32-1"/>
    <property type="organism name" value="mouse"/>
</dbReference>
<dbReference type="AGR" id="MGI:2138351"/>
<dbReference type="CTD" id="55061"/>
<dbReference type="MGI" id="MGI:2138351">
    <property type="gene designation" value="Susd4"/>
</dbReference>
<dbReference type="VEuPathDB" id="HostDB:ENSMUSG00000038576"/>
<dbReference type="eggNOG" id="ENOG502QU1F">
    <property type="taxonomic scope" value="Eukaryota"/>
</dbReference>
<dbReference type="GeneTree" id="ENSGT00940000160410"/>
<dbReference type="HOGENOM" id="CLU_044351_1_0_1"/>
<dbReference type="InParanoid" id="Q8BH32"/>
<dbReference type="OMA" id="MIEHGDY"/>
<dbReference type="OrthoDB" id="7487745at2759"/>
<dbReference type="PhylomeDB" id="Q8BH32"/>
<dbReference type="TreeFam" id="TF332459"/>
<dbReference type="BioGRID-ORCS" id="96935">
    <property type="hits" value="3 hits in 77 CRISPR screens"/>
</dbReference>
<dbReference type="ChiTaRS" id="Susd4">
    <property type="organism name" value="mouse"/>
</dbReference>
<dbReference type="PRO" id="PR:Q8BH32"/>
<dbReference type="Proteomes" id="UP000000589">
    <property type="component" value="Chromosome 1"/>
</dbReference>
<dbReference type="RNAct" id="Q8BH32">
    <property type="molecule type" value="protein"/>
</dbReference>
<dbReference type="Bgee" id="ENSMUSG00000038576">
    <property type="expression patterns" value="Expressed in ventromedial nucleus of hypothalamus and 181 other cell types or tissues"/>
</dbReference>
<dbReference type="ExpressionAtlas" id="Q8BH32">
    <property type="expression patterns" value="baseline and differential"/>
</dbReference>
<dbReference type="GO" id="GO:0098688">
    <property type="term" value="C:parallel fiber to Purkinje cell synapse"/>
    <property type="evidence" value="ECO:0000314"/>
    <property type="project" value="SynGO"/>
</dbReference>
<dbReference type="GO" id="GO:0045211">
    <property type="term" value="C:postsynaptic membrane"/>
    <property type="evidence" value="ECO:0000314"/>
    <property type="project" value="SynGO"/>
</dbReference>
<dbReference type="GO" id="GO:0030449">
    <property type="term" value="P:regulation of complement activation"/>
    <property type="evidence" value="ECO:0007669"/>
    <property type="project" value="Ensembl"/>
</dbReference>
<dbReference type="GO" id="GO:0099149">
    <property type="term" value="P:regulation of postsynaptic neurotransmitter receptor internalization"/>
    <property type="evidence" value="ECO:0000314"/>
    <property type="project" value="SynGO"/>
</dbReference>
<dbReference type="CDD" id="cd00033">
    <property type="entry name" value="CCP"/>
    <property type="match status" value="4"/>
</dbReference>
<dbReference type="FunFam" id="2.10.70.10:FF:000030">
    <property type="entry name" value="Sushi domain-containing protein 4"/>
    <property type="match status" value="1"/>
</dbReference>
<dbReference type="FunFam" id="2.10.70.10:FF:000063">
    <property type="entry name" value="Sushi domain-containing protein 4"/>
    <property type="match status" value="1"/>
</dbReference>
<dbReference type="FunFam" id="2.10.70.10:FF:000121">
    <property type="entry name" value="Sushi domain-containing protein 4"/>
    <property type="match status" value="1"/>
</dbReference>
<dbReference type="FunFam" id="2.10.70.10:FF:000140">
    <property type="entry name" value="Sushi domain-containing protein 4"/>
    <property type="match status" value="1"/>
</dbReference>
<dbReference type="Gene3D" id="2.10.70.10">
    <property type="entry name" value="Complement Module, domain 1"/>
    <property type="match status" value="4"/>
</dbReference>
<dbReference type="InterPro" id="IPR042985">
    <property type="entry name" value="SUSD4"/>
</dbReference>
<dbReference type="InterPro" id="IPR035976">
    <property type="entry name" value="Sushi/SCR/CCP_sf"/>
</dbReference>
<dbReference type="InterPro" id="IPR000436">
    <property type="entry name" value="Sushi_SCR_CCP_dom"/>
</dbReference>
<dbReference type="PANTHER" id="PTHR47007">
    <property type="entry name" value="SUSHI DOMAIN-CONTAINING PROTEIN 4"/>
    <property type="match status" value="1"/>
</dbReference>
<dbReference type="PANTHER" id="PTHR47007:SF1">
    <property type="entry name" value="SUSHI DOMAIN-CONTAINING PROTEIN 4"/>
    <property type="match status" value="1"/>
</dbReference>
<dbReference type="Pfam" id="PF00084">
    <property type="entry name" value="Sushi"/>
    <property type="match status" value="3"/>
</dbReference>
<dbReference type="SMART" id="SM00032">
    <property type="entry name" value="CCP"/>
    <property type="match status" value="4"/>
</dbReference>
<dbReference type="SUPFAM" id="SSF57535">
    <property type="entry name" value="Complement control module/SCR domain"/>
    <property type="match status" value="4"/>
</dbReference>
<dbReference type="PROSITE" id="PS50923">
    <property type="entry name" value="SUSHI"/>
    <property type="match status" value="4"/>
</dbReference>
<gene>
    <name type="primary">Susd4</name>
</gene>
<organism>
    <name type="scientific">Mus musculus</name>
    <name type="common">Mouse</name>
    <dbReference type="NCBI Taxonomy" id="10090"/>
    <lineage>
        <taxon>Eukaryota</taxon>
        <taxon>Metazoa</taxon>
        <taxon>Chordata</taxon>
        <taxon>Craniata</taxon>
        <taxon>Vertebrata</taxon>
        <taxon>Euteleostomi</taxon>
        <taxon>Mammalia</taxon>
        <taxon>Eutheria</taxon>
        <taxon>Euarchontoglires</taxon>
        <taxon>Glires</taxon>
        <taxon>Rodentia</taxon>
        <taxon>Myomorpha</taxon>
        <taxon>Muroidea</taxon>
        <taxon>Muridae</taxon>
        <taxon>Murinae</taxon>
        <taxon>Mus</taxon>
        <taxon>Mus</taxon>
    </lineage>
</organism>
<name>SUSD4_MOUSE</name>
<evidence type="ECO:0000250" key="1">
    <source>
        <dbReference type="UniProtKB" id="Q5VX71"/>
    </source>
</evidence>
<evidence type="ECO:0000255" key="2"/>
<evidence type="ECO:0000255" key="3">
    <source>
        <dbReference type="PROSITE-ProRule" id="PRU00302"/>
    </source>
</evidence>
<evidence type="ECO:0000256" key="4">
    <source>
        <dbReference type="SAM" id="MobiDB-lite"/>
    </source>
</evidence>
<evidence type="ECO:0000269" key="5">
    <source>
    </source>
</evidence>
<evidence type="ECO:0000303" key="6">
    <source>
    </source>
</evidence>
<evidence type="ECO:0000305" key="7"/>
<sequence length="490" mass="53797">MYHGMNPSNGDGFLEQQLQQQQPQSPQRLLAVILWFQLALCFGPAQLTGGFDDLNVCADPGVPENGFRTPSGGVFFESSVTRFHCQDGFRLKGSTKRLCMKHFNGTLGWVPSDKPVCIQEDCRIPQIEDAEIRNKTYRHGEKLVIDCHEGFKIRYPDLYNLVSLCRDDGTWDNLPICQGCLRPLASSNGYVNISEFQTSFPVGTVIAYRCFPGFKLEGSENLECLHNLIWSSSPPRCLALEVCPLPPMVSHGDFICHPRPCERYNHGTVVEFYCDPGYSLTSDYKYITCQYGEWFPSYQVYCIKSEQTWPSTHETLLTTWKIVAFTATSVLLVLLLVILARMFQTKFKAHFPPRGPPRSSSSDPDFVVVDGVPVMLPTYDEAVNGSSSALGPGYPASVGQGCPLPVDDQSPPAYPGSGDTDTGPGESETCDSTSGSSEMLQSLYSPPMCQGGSRPAPDTPDTISSTAGEVASTSPGIDIADEIPLMEEDP</sequence>
<accession>Q8BH32</accession>
<accession>Q8VC43</accession>
<protein>
    <recommendedName>
        <fullName>Sushi domain-containing protein 4</fullName>
    </recommendedName>
</protein>
<keyword id="KW-0025">Alternative splicing</keyword>
<keyword id="KW-1015">Disulfide bond</keyword>
<keyword id="KW-0325">Glycoprotein</keyword>
<keyword id="KW-0472">Membrane</keyword>
<keyword id="KW-1185">Reference proteome</keyword>
<keyword id="KW-0677">Repeat</keyword>
<keyword id="KW-0732">Signal</keyword>
<keyword id="KW-0768">Sushi</keyword>
<keyword id="KW-0812">Transmembrane</keyword>
<keyword id="KW-1133">Transmembrane helix</keyword>
<comment type="function">
    <text evidence="1 5">Acts as a complement inhibitor by disrupting the formation of the classical C3 convertase. Isoform 3 inhibits the classical complement pathway, while membrane-bound isoform 1 inhibits deposition of C3b via both the classical and alternative complement pathways.</text>
</comment>
<comment type="subcellular location">
    <subcellularLocation>
        <location evidence="7">Membrane</location>
        <topology evidence="7">Single-pass type I membrane protein</topology>
    </subcellularLocation>
</comment>
<comment type="alternative products">
    <event type="alternative splicing"/>
    <isoform>
        <id>Q8BH32-1</id>
        <name>1</name>
        <sequence type="displayed"/>
    </isoform>
    <isoform>
        <id>Q8BH32-2</id>
        <name>2</name>
        <sequence type="described" ref="VSP_020844"/>
    </isoform>
</comment>
<comment type="tissue specificity">
    <text evidence="5">High expression in brain and eye, with weaker expression in spinal cord and testis. Detected in white matter of brain and in the outer segments of photoreceptors.</text>
</comment>
<comment type="miscellaneous">
    <text evidence="5 7">In contrast some authors report that SUSD4 acts as an activator of the alternative complement pathway, while having no effect on the classical pathway (in vitro) (PubMed:20348246). These contradictory results with human may lie in the differences in protein expression, in this study SUSD4 is expressed in bacteria and not in eukaryotic cells.</text>
</comment>
<reference key="1">
    <citation type="journal article" date="2005" name="Science">
        <title>The transcriptional landscape of the mammalian genome.</title>
        <authorList>
            <person name="Carninci P."/>
            <person name="Kasukawa T."/>
            <person name="Katayama S."/>
            <person name="Gough J."/>
            <person name="Frith M.C."/>
            <person name="Maeda N."/>
            <person name="Oyama R."/>
            <person name="Ravasi T."/>
            <person name="Lenhard B."/>
            <person name="Wells C."/>
            <person name="Kodzius R."/>
            <person name="Shimokawa K."/>
            <person name="Bajic V.B."/>
            <person name="Brenner S.E."/>
            <person name="Batalov S."/>
            <person name="Forrest A.R."/>
            <person name="Zavolan M."/>
            <person name="Davis M.J."/>
            <person name="Wilming L.G."/>
            <person name="Aidinis V."/>
            <person name="Allen J.E."/>
            <person name="Ambesi-Impiombato A."/>
            <person name="Apweiler R."/>
            <person name="Aturaliya R.N."/>
            <person name="Bailey T.L."/>
            <person name="Bansal M."/>
            <person name="Baxter L."/>
            <person name="Beisel K.W."/>
            <person name="Bersano T."/>
            <person name="Bono H."/>
            <person name="Chalk A.M."/>
            <person name="Chiu K.P."/>
            <person name="Choudhary V."/>
            <person name="Christoffels A."/>
            <person name="Clutterbuck D.R."/>
            <person name="Crowe M.L."/>
            <person name="Dalla E."/>
            <person name="Dalrymple B.P."/>
            <person name="de Bono B."/>
            <person name="Della Gatta G."/>
            <person name="di Bernardo D."/>
            <person name="Down T."/>
            <person name="Engstrom P."/>
            <person name="Fagiolini M."/>
            <person name="Faulkner G."/>
            <person name="Fletcher C.F."/>
            <person name="Fukushima T."/>
            <person name="Furuno M."/>
            <person name="Futaki S."/>
            <person name="Gariboldi M."/>
            <person name="Georgii-Hemming P."/>
            <person name="Gingeras T.R."/>
            <person name="Gojobori T."/>
            <person name="Green R.E."/>
            <person name="Gustincich S."/>
            <person name="Harbers M."/>
            <person name="Hayashi Y."/>
            <person name="Hensch T.K."/>
            <person name="Hirokawa N."/>
            <person name="Hill D."/>
            <person name="Huminiecki L."/>
            <person name="Iacono M."/>
            <person name="Ikeo K."/>
            <person name="Iwama A."/>
            <person name="Ishikawa T."/>
            <person name="Jakt M."/>
            <person name="Kanapin A."/>
            <person name="Katoh M."/>
            <person name="Kawasawa Y."/>
            <person name="Kelso J."/>
            <person name="Kitamura H."/>
            <person name="Kitano H."/>
            <person name="Kollias G."/>
            <person name="Krishnan S.P."/>
            <person name="Kruger A."/>
            <person name="Kummerfeld S.K."/>
            <person name="Kurochkin I.V."/>
            <person name="Lareau L.F."/>
            <person name="Lazarevic D."/>
            <person name="Lipovich L."/>
            <person name="Liu J."/>
            <person name="Liuni S."/>
            <person name="McWilliam S."/>
            <person name="Madan Babu M."/>
            <person name="Madera M."/>
            <person name="Marchionni L."/>
            <person name="Matsuda H."/>
            <person name="Matsuzawa S."/>
            <person name="Miki H."/>
            <person name="Mignone F."/>
            <person name="Miyake S."/>
            <person name="Morris K."/>
            <person name="Mottagui-Tabar S."/>
            <person name="Mulder N."/>
            <person name="Nakano N."/>
            <person name="Nakauchi H."/>
            <person name="Ng P."/>
            <person name="Nilsson R."/>
            <person name="Nishiguchi S."/>
            <person name="Nishikawa S."/>
            <person name="Nori F."/>
            <person name="Ohara O."/>
            <person name="Okazaki Y."/>
            <person name="Orlando V."/>
            <person name="Pang K.C."/>
            <person name="Pavan W.J."/>
            <person name="Pavesi G."/>
            <person name="Pesole G."/>
            <person name="Petrovsky N."/>
            <person name="Piazza S."/>
            <person name="Reed J."/>
            <person name="Reid J.F."/>
            <person name="Ring B.Z."/>
            <person name="Ringwald M."/>
            <person name="Rost B."/>
            <person name="Ruan Y."/>
            <person name="Salzberg S.L."/>
            <person name="Sandelin A."/>
            <person name="Schneider C."/>
            <person name="Schoenbach C."/>
            <person name="Sekiguchi K."/>
            <person name="Semple C.A."/>
            <person name="Seno S."/>
            <person name="Sessa L."/>
            <person name="Sheng Y."/>
            <person name="Shibata Y."/>
            <person name="Shimada H."/>
            <person name="Shimada K."/>
            <person name="Silva D."/>
            <person name="Sinclair B."/>
            <person name="Sperling S."/>
            <person name="Stupka E."/>
            <person name="Sugiura K."/>
            <person name="Sultana R."/>
            <person name="Takenaka Y."/>
            <person name="Taki K."/>
            <person name="Tammoja K."/>
            <person name="Tan S.L."/>
            <person name="Tang S."/>
            <person name="Taylor M.S."/>
            <person name="Tegner J."/>
            <person name="Teichmann S.A."/>
            <person name="Ueda H.R."/>
            <person name="van Nimwegen E."/>
            <person name="Verardo R."/>
            <person name="Wei C.L."/>
            <person name="Yagi K."/>
            <person name="Yamanishi H."/>
            <person name="Zabarovsky E."/>
            <person name="Zhu S."/>
            <person name="Zimmer A."/>
            <person name="Hide W."/>
            <person name="Bult C."/>
            <person name="Grimmond S.M."/>
            <person name="Teasdale R.D."/>
            <person name="Liu E.T."/>
            <person name="Brusic V."/>
            <person name="Quackenbush J."/>
            <person name="Wahlestedt C."/>
            <person name="Mattick J.S."/>
            <person name="Hume D.A."/>
            <person name="Kai C."/>
            <person name="Sasaki D."/>
            <person name="Tomaru Y."/>
            <person name="Fukuda S."/>
            <person name="Kanamori-Katayama M."/>
            <person name="Suzuki M."/>
            <person name="Aoki J."/>
            <person name="Arakawa T."/>
            <person name="Iida J."/>
            <person name="Imamura K."/>
            <person name="Itoh M."/>
            <person name="Kato T."/>
            <person name="Kawaji H."/>
            <person name="Kawagashira N."/>
            <person name="Kawashima T."/>
            <person name="Kojima M."/>
            <person name="Kondo S."/>
            <person name="Konno H."/>
            <person name="Nakano K."/>
            <person name="Ninomiya N."/>
            <person name="Nishio T."/>
            <person name="Okada M."/>
            <person name="Plessy C."/>
            <person name="Shibata K."/>
            <person name="Shiraki T."/>
            <person name="Suzuki S."/>
            <person name="Tagami M."/>
            <person name="Waki K."/>
            <person name="Watahiki A."/>
            <person name="Okamura-Oho Y."/>
            <person name="Suzuki H."/>
            <person name="Kawai J."/>
            <person name="Hayashizaki Y."/>
        </authorList>
    </citation>
    <scope>NUCLEOTIDE SEQUENCE [LARGE SCALE MRNA] (ISOFORM 1)</scope>
    <source>
        <strain>C57BL/6J</strain>
        <strain>NOD</strain>
        <tissue>Cerebellum</tissue>
        <tissue>Thymus</tissue>
    </source>
</reference>
<reference key="2">
    <citation type="journal article" date="2004" name="Genome Res.">
        <title>The status, quality, and expansion of the NIH full-length cDNA project: the Mammalian Gene Collection (MGC).</title>
        <authorList>
            <consortium name="The MGC Project Team"/>
        </authorList>
    </citation>
    <scope>NUCLEOTIDE SEQUENCE [LARGE SCALE MRNA] (ISOFORM 2)</scope>
    <source>
        <strain>FVB/N</strain>
        <tissue>Liver</tissue>
    </source>
</reference>
<reference key="3">
    <citation type="journal article" date="2010" name="Am. J. Pathol.">
        <title>Tissue distribution and functional analysis of Sushi domain-containing protein 4.</title>
        <authorList>
            <person name="Tu Z."/>
            <person name="Cohen M."/>
            <person name="Bu H."/>
            <person name="Lin F."/>
        </authorList>
    </citation>
    <scope>TISSUE SPECIFICITY</scope>
    <scope>FUNCTION</scope>
</reference>
<proteinExistence type="evidence at transcript level"/>